<organism>
    <name type="scientific">Sinorhizobium fredii (strain NBRC 101917 / NGR234)</name>
    <dbReference type="NCBI Taxonomy" id="394"/>
    <lineage>
        <taxon>Bacteria</taxon>
        <taxon>Pseudomonadati</taxon>
        <taxon>Pseudomonadota</taxon>
        <taxon>Alphaproteobacteria</taxon>
        <taxon>Hyphomicrobiales</taxon>
        <taxon>Rhizobiaceae</taxon>
        <taxon>Sinorhizobium/Ensifer group</taxon>
        <taxon>Sinorhizobium</taxon>
    </lineage>
</organism>
<sequence length="293" mass="31865">MPSLKDLKNRIASVKATQKITKAMKMVAAAKLRRAQEAAEAARPYSQRMAAVLANIAQAVGADDSAPALMTGTGRDNTHLLVVCTAERGLCGGFNSQIARFARDHVRKLLAQGKTVKIICVGKKGFDILRREFASLIIDRVDLREVKKIGFENADRIGHKVIELFEKGEFDVCTLFYSEFKSVISQVPTAQQLIPASAGPVAAEADSASAVYEYEPDAAAILTDLIPRNISVQIFRALLENVAGEMGAKMSAMDNATRNAGEMINKLTLNYNRQRQAQITKELIEIISGAEAL</sequence>
<dbReference type="EMBL" id="CP001389">
    <property type="protein sequence ID" value="ACP26847.1"/>
    <property type="molecule type" value="Genomic_DNA"/>
</dbReference>
<dbReference type="RefSeq" id="WP_012709599.1">
    <property type="nucleotide sequence ID" value="NC_012587.1"/>
</dbReference>
<dbReference type="RefSeq" id="YP_002827600.1">
    <property type="nucleotide sequence ID" value="NC_012587.1"/>
</dbReference>
<dbReference type="SMR" id="C3M9S2"/>
<dbReference type="STRING" id="394.NGR_c31120"/>
<dbReference type="KEGG" id="rhi:NGR_c31120"/>
<dbReference type="PATRIC" id="fig|394.7.peg.5950"/>
<dbReference type="eggNOG" id="COG0224">
    <property type="taxonomic scope" value="Bacteria"/>
</dbReference>
<dbReference type="HOGENOM" id="CLU_050669_0_1_5"/>
<dbReference type="OrthoDB" id="9812769at2"/>
<dbReference type="Proteomes" id="UP000001054">
    <property type="component" value="Chromosome"/>
</dbReference>
<dbReference type="GO" id="GO:0005886">
    <property type="term" value="C:plasma membrane"/>
    <property type="evidence" value="ECO:0007669"/>
    <property type="project" value="UniProtKB-SubCell"/>
</dbReference>
<dbReference type="GO" id="GO:0045259">
    <property type="term" value="C:proton-transporting ATP synthase complex"/>
    <property type="evidence" value="ECO:0007669"/>
    <property type="project" value="UniProtKB-KW"/>
</dbReference>
<dbReference type="GO" id="GO:0005524">
    <property type="term" value="F:ATP binding"/>
    <property type="evidence" value="ECO:0007669"/>
    <property type="project" value="UniProtKB-UniRule"/>
</dbReference>
<dbReference type="GO" id="GO:0046933">
    <property type="term" value="F:proton-transporting ATP synthase activity, rotational mechanism"/>
    <property type="evidence" value="ECO:0007669"/>
    <property type="project" value="UniProtKB-UniRule"/>
</dbReference>
<dbReference type="GO" id="GO:0042777">
    <property type="term" value="P:proton motive force-driven plasma membrane ATP synthesis"/>
    <property type="evidence" value="ECO:0007669"/>
    <property type="project" value="UniProtKB-UniRule"/>
</dbReference>
<dbReference type="CDD" id="cd12151">
    <property type="entry name" value="F1-ATPase_gamma"/>
    <property type="match status" value="1"/>
</dbReference>
<dbReference type="FunFam" id="1.10.287.80:FF:000001">
    <property type="entry name" value="ATP synthase gamma chain"/>
    <property type="match status" value="1"/>
</dbReference>
<dbReference type="FunFam" id="1.10.287.80:FF:000003">
    <property type="entry name" value="ATP synthase gamma chain, chloroplastic"/>
    <property type="match status" value="1"/>
</dbReference>
<dbReference type="Gene3D" id="3.40.1380.10">
    <property type="match status" value="1"/>
</dbReference>
<dbReference type="Gene3D" id="1.10.287.80">
    <property type="entry name" value="ATP synthase, gamma subunit, helix hairpin domain"/>
    <property type="match status" value="1"/>
</dbReference>
<dbReference type="HAMAP" id="MF_00815">
    <property type="entry name" value="ATP_synth_gamma_bact"/>
    <property type="match status" value="1"/>
</dbReference>
<dbReference type="InterPro" id="IPR035968">
    <property type="entry name" value="ATP_synth_F1_ATPase_gsu"/>
</dbReference>
<dbReference type="InterPro" id="IPR000131">
    <property type="entry name" value="ATP_synth_F1_gsu"/>
</dbReference>
<dbReference type="InterPro" id="IPR023632">
    <property type="entry name" value="ATP_synth_F1_gsu_CS"/>
</dbReference>
<dbReference type="NCBIfam" id="TIGR01146">
    <property type="entry name" value="ATPsyn_F1gamma"/>
    <property type="match status" value="1"/>
</dbReference>
<dbReference type="NCBIfam" id="NF004146">
    <property type="entry name" value="PRK05621.1-4"/>
    <property type="match status" value="1"/>
</dbReference>
<dbReference type="PANTHER" id="PTHR11693">
    <property type="entry name" value="ATP SYNTHASE GAMMA CHAIN"/>
    <property type="match status" value="1"/>
</dbReference>
<dbReference type="PANTHER" id="PTHR11693:SF22">
    <property type="entry name" value="ATP SYNTHASE SUBUNIT GAMMA, MITOCHONDRIAL"/>
    <property type="match status" value="1"/>
</dbReference>
<dbReference type="Pfam" id="PF00231">
    <property type="entry name" value="ATP-synt"/>
    <property type="match status" value="1"/>
</dbReference>
<dbReference type="PIRSF" id="PIRSF039089">
    <property type="entry name" value="ATP_synthase_gamma"/>
    <property type="match status" value="1"/>
</dbReference>
<dbReference type="PRINTS" id="PR00126">
    <property type="entry name" value="ATPASEGAMMA"/>
</dbReference>
<dbReference type="SUPFAM" id="SSF52943">
    <property type="entry name" value="ATP synthase (F1-ATPase), gamma subunit"/>
    <property type="match status" value="1"/>
</dbReference>
<dbReference type="PROSITE" id="PS00153">
    <property type="entry name" value="ATPASE_GAMMA"/>
    <property type="match status" value="1"/>
</dbReference>
<feature type="chain" id="PRO_1000148632" description="ATP synthase gamma chain">
    <location>
        <begin position="1"/>
        <end position="293"/>
    </location>
</feature>
<protein>
    <recommendedName>
        <fullName evidence="1">ATP synthase gamma chain</fullName>
    </recommendedName>
    <alternativeName>
        <fullName evidence="1">ATP synthase F1 sector gamma subunit</fullName>
    </alternativeName>
    <alternativeName>
        <fullName evidence="1">F-ATPase gamma subunit</fullName>
    </alternativeName>
</protein>
<comment type="function">
    <text evidence="1">Produces ATP from ADP in the presence of a proton gradient across the membrane. The gamma chain is believed to be important in regulating ATPase activity and the flow of protons through the CF(0) complex.</text>
</comment>
<comment type="subunit">
    <text evidence="1">F-type ATPases have 2 components, CF(1) - the catalytic core - and CF(0) - the membrane proton channel. CF(1) has five subunits: alpha(3), beta(3), gamma(1), delta(1), epsilon(1). CF(0) has three main subunits: a, b and c.</text>
</comment>
<comment type="subcellular location">
    <subcellularLocation>
        <location evidence="1">Cell inner membrane</location>
        <topology evidence="1">Peripheral membrane protein</topology>
    </subcellularLocation>
</comment>
<comment type="similarity">
    <text evidence="1">Belongs to the ATPase gamma chain family.</text>
</comment>
<proteinExistence type="inferred from homology"/>
<reference key="1">
    <citation type="journal article" date="2009" name="Appl. Environ. Microbiol.">
        <title>Rhizobium sp. strain NGR234 possesses a remarkable number of secretion systems.</title>
        <authorList>
            <person name="Schmeisser C."/>
            <person name="Liesegang H."/>
            <person name="Krysciak D."/>
            <person name="Bakkou N."/>
            <person name="Le Quere A."/>
            <person name="Wollherr A."/>
            <person name="Heinemeyer I."/>
            <person name="Morgenstern B."/>
            <person name="Pommerening-Roeser A."/>
            <person name="Flores M."/>
            <person name="Palacios R."/>
            <person name="Brenner S."/>
            <person name="Gottschalk G."/>
            <person name="Schmitz R.A."/>
            <person name="Broughton W.J."/>
            <person name="Perret X."/>
            <person name="Strittmatter A.W."/>
            <person name="Streit W.R."/>
        </authorList>
    </citation>
    <scope>NUCLEOTIDE SEQUENCE [LARGE SCALE GENOMIC DNA]</scope>
    <source>
        <strain>NBRC 101917 / NGR234</strain>
    </source>
</reference>
<gene>
    <name evidence="1" type="primary">atpG</name>
    <name type="ordered locus">NGR_c31120</name>
</gene>
<accession>C3M9S2</accession>
<evidence type="ECO:0000255" key="1">
    <source>
        <dbReference type="HAMAP-Rule" id="MF_00815"/>
    </source>
</evidence>
<name>ATPG_SINFN</name>
<keyword id="KW-0066">ATP synthesis</keyword>
<keyword id="KW-0997">Cell inner membrane</keyword>
<keyword id="KW-1003">Cell membrane</keyword>
<keyword id="KW-0139">CF(1)</keyword>
<keyword id="KW-0375">Hydrogen ion transport</keyword>
<keyword id="KW-0406">Ion transport</keyword>
<keyword id="KW-0472">Membrane</keyword>
<keyword id="KW-1185">Reference proteome</keyword>
<keyword id="KW-0813">Transport</keyword>